<feature type="transit peptide" description="Mitochondrion" evidence="1">
    <location>
        <begin position="1"/>
        <end status="unknown"/>
    </location>
</feature>
<feature type="chain" id="PRO_0000456879" description="DNA-(apurinic or apyrimidinic site) endonuclease">
    <location>
        <begin status="unknown"/>
        <end position="540"/>
    </location>
</feature>
<feature type="region of interest" description="Disordered" evidence="4">
    <location>
        <begin position="256"/>
        <end position="276"/>
    </location>
</feature>
<feature type="compositionally biased region" description="Basic and acidic residues" evidence="4">
    <location>
        <begin position="263"/>
        <end position="276"/>
    </location>
</feature>
<feature type="active site" description="Proton acceptor" evidence="2">
    <location>
        <position position="531"/>
    </location>
</feature>
<feature type="binding site" evidence="2">
    <location>
        <position position="206"/>
    </location>
    <ligand>
        <name>Mg(2+)</name>
        <dbReference type="ChEBI" id="CHEBI:18420"/>
    </ligand>
</feature>
<feature type="binding site" evidence="2">
    <location>
        <position position="239"/>
    </location>
    <ligand>
        <name>Mg(2+)</name>
        <dbReference type="ChEBI" id="CHEBI:18420"/>
    </ligand>
</feature>
<feature type="binding site" evidence="2">
    <location>
        <position position="400"/>
    </location>
    <ligand>
        <name>Mg(2+)</name>
        <dbReference type="ChEBI" id="CHEBI:18420"/>
    </ligand>
</feature>
<feature type="binding site" evidence="2">
    <location>
        <position position="402"/>
    </location>
    <ligand>
        <name>Mg(2+)</name>
        <dbReference type="ChEBI" id="CHEBI:18420"/>
    </ligand>
</feature>
<feature type="binding site" evidence="2">
    <location>
        <position position="530"/>
    </location>
    <ligand>
        <name>Mg(2+)</name>
        <dbReference type="ChEBI" id="CHEBI:18420"/>
    </ligand>
</feature>
<feature type="binding site" evidence="2">
    <location>
        <position position="531"/>
    </location>
    <ligand>
        <name>Mg(2+)</name>
        <dbReference type="ChEBI" id="CHEBI:18420"/>
    </ligand>
</feature>
<name>APEX_PLABA</name>
<reference evidence="9" key="1">
    <citation type="journal article" date="2014" name="BMC Biol.">
        <title>A comprehensive evaluation of rodent malaria parasite genomes and gene expression.</title>
        <authorList>
            <person name="Otto T.D."/>
            <person name="Bohme U."/>
            <person name="Jackson A.P."/>
            <person name="Hunt M."/>
            <person name="Franke-Fayard B."/>
            <person name="Hoeijmakers W.A."/>
            <person name="Religa A.A."/>
            <person name="Robertson L."/>
            <person name="Sanders M."/>
            <person name="Ogun S.A."/>
            <person name="Cunningham D."/>
            <person name="Erhart A."/>
            <person name="Billker O."/>
            <person name="Khan S.M."/>
            <person name="Stunnenberg H.G."/>
            <person name="Langhorne J."/>
            <person name="Holder A.A."/>
            <person name="Waters A.P."/>
            <person name="Newbold C.I."/>
            <person name="Pain A."/>
            <person name="Berriman M."/>
            <person name="Janse C.J."/>
        </authorList>
    </citation>
    <scope>NUCLEOTIDE SEQUENCE [LARGE SCALE GENOMIC DNA]</scope>
    <source>
        <strain evidence="9">ANKA</strain>
    </source>
</reference>
<reference evidence="7" key="2">
    <citation type="journal article" date="2021" name="DNA Repair">
        <title>Plasmodium Ape1 is a multifunctional enzyme in mitochondrial base excision repair and is required for efficient transition from liver to blood stage infection.</title>
        <authorList>
            <person name="Verma N."/>
            <person name="Shukla H."/>
            <person name="Tiwari A."/>
            <person name="Mishra S."/>
            <person name="Habib S."/>
        </authorList>
    </citation>
    <scope>FUNCTION</scope>
    <scope>DISRUPTION PHENOTYPE</scope>
</reference>
<organism evidence="9">
    <name type="scientific">Plasmodium berghei (strain Anka)</name>
    <dbReference type="NCBI Taxonomy" id="5823"/>
    <lineage>
        <taxon>Eukaryota</taxon>
        <taxon>Sar</taxon>
        <taxon>Alveolata</taxon>
        <taxon>Apicomplexa</taxon>
        <taxon>Aconoidasida</taxon>
        <taxon>Haemosporida</taxon>
        <taxon>Plasmodiidae</taxon>
        <taxon>Plasmodium</taxon>
        <taxon>Plasmodium (Vinckeia)</taxon>
    </lineage>
</organism>
<dbReference type="EC" id="3.1.11.2" evidence="1"/>
<dbReference type="EMBL" id="LK023119">
    <property type="protein sequence ID" value="VUC54265.1"/>
    <property type="molecule type" value="Genomic_DNA"/>
</dbReference>
<dbReference type="SMR" id="A0A509ADV9"/>
<dbReference type="FunCoup" id="A0A509ADV9">
    <property type="interactions" value="16"/>
</dbReference>
<dbReference type="STRING" id="5823.A0A509ADV9"/>
<dbReference type="VEuPathDB" id="PlasmoDB:PBANKA_0404100"/>
<dbReference type="InParanoid" id="A0A509ADV9"/>
<dbReference type="OMA" id="AFCQFVS"/>
<dbReference type="Proteomes" id="UP000074855">
    <property type="component" value="Chromosome 4"/>
</dbReference>
<dbReference type="GO" id="GO:0005739">
    <property type="term" value="C:mitochondrion"/>
    <property type="evidence" value="ECO:0007669"/>
    <property type="project" value="UniProtKB-SubCell"/>
</dbReference>
<dbReference type="GO" id="GO:0005634">
    <property type="term" value="C:nucleus"/>
    <property type="evidence" value="ECO:0007669"/>
    <property type="project" value="TreeGrafter"/>
</dbReference>
<dbReference type="GO" id="GO:0003906">
    <property type="term" value="F:DNA-(apurinic or apyrimidinic site) endonuclease activity"/>
    <property type="evidence" value="ECO:0007669"/>
    <property type="project" value="TreeGrafter"/>
</dbReference>
<dbReference type="GO" id="GO:0008311">
    <property type="term" value="F:double-stranded DNA 3'-5' DNA exonuclease activity"/>
    <property type="evidence" value="ECO:0007669"/>
    <property type="project" value="TreeGrafter"/>
</dbReference>
<dbReference type="GO" id="GO:0004519">
    <property type="term" value="F:endonuclease activity"/>
    <property type="evidence" value="ECO:0007669"/>
    <property type="project" value="UniProtKB-KW"/>
</dbReference>
<dbReference type="GO" id="GO:0046872">
    <property type="term" value="F:metal ion binding"/>
    <property type="evidence" value="ECO:0007669"/>
    <property type="project" value="UniProtKB-KW"/>
</dbReference>
<dbReference type="GO" id="GO:0008081">
    <property type="term" value="F:phosphoric diester hydrolase activity"/>
    <property type="evidence" value="ECO:0007669"/>
    <property type="project" value="TreeGrafter"/>
</dbReference>
<dbReference type="GO" id="GO:0006284">
    <property type="term" value="P:base-excision repair"/>
    <property type="evidence" value="ECO:0007669"/>
    <property type="project" value="TreeGrafter"/>
</dbReference>
<dbReference type="Gene3D" id="3.60.10.10">
    <property type="entry name" value="Endonuclease/exonuclease/phosphatase"/>
    <property type="match status" value="1"/>
</dbReference>
<dbReference type="InterPro" id="IPR004808">
    <property type="entry name" value="AP_endonuc_1"/>
</dbReference>
<dbReference type="InterPro" id="IPR036691">
    <property type="entry name" value="Endo/exonu/phosph_ase_sf"/>
</dbReference>
<dbReference type="InterPro" id="IPR005135">
    <property type="entry name" value="Endo/exonuclease/phosphatase"/>
</dbReference>
<dbReference type="NCBIfam" id="TIGR00633">
    <property type="entry name" value="xth"/>
    <property type="match status" value="1"/>
</dbReference>
<dbReference type="PANTHER" id="PTHR22748">
    <property type="entry name" value="AP ENDONUCLEASE"/>
    <property type="match status" value="1"/>
</dbReference>
<dbReference type="PANTHER" id="PTHR22748:SF6">
    <property type="entry name" value="DNA-(APURINIC OR APYRIMIDINIC SITE) ENDONUCLEASE"/>
    <property type="match status" value="1"/>
</dbReference>
<dbReference type="Pfam" id="PF03372">
    <property type="entry name" value="Exo_endo_phos"/>
    <property type="match status" value="1"/>
</dbReference>
<dbReference type="SUPFAM" id="SSF56219">
    <property type="entry name" value="DNase I-like"/>
    <property type="match status" value="1"/>
</dbReference>
<dbReference type="PROSITE" id="PS51435">
    <property type="entry name" value="AP_NUCLEASE_F1_4"/>
    <property type="match status" value="1"/>
</dbReference>
<keyword id="KW-0227">DNA damage</keyword>
<keyword id="KW-0234">DNA repair</keyword>
<keyword id="KW-0255">Endonuclease</keyword>
<keyword id="KW-0269">Exonuclease</keyword>
<keyword id="KW-0378">Hydrolase</keyword>
<keyword id="KW-0460">Magnesium</keyword>
<keyword id="KW-0464">Manganese</keyword>
<keyword id="KW-0479">Metal-binding</keyword>
<keyword id="KW-0496">Mitochondrion</keyword>
<keyword id="KW-0540">Nuclease</keyword>
<keyword id="KW-1185">Reference proteome</keyword>
<keyword id="KW-0809">Transit peptide</keyword>
<sequence>MNIKKFRILFFFNKKYSYLSTIKLKEFHLNHWEKYNNKLKIMENIPNGKKRQNTYLDGGSDFDVNKKTRLVLLNERGVSGRIPTTANIGEINNKDNVLKTFDVCNSFNSAFENDKSEELETHHDKIVGLKIPTIHDTIKTEKKVIIKKECEIKDVNPNDKIGGSLENDKIEGGLENEKIGGGLENDKKNELPEQVRKNVNVIVTWNMNSITVRYKNKEKWKRFMKFVNEINADVLCFQEVRLPALNISKNESKNVNNKVYGGKKNEGEERNRGSVKNTDQKSLIDYKIVEEILKNDFKEYNGYFSLANIKYSGQLVLVKKSIKVKSVRYNLLFETDPNIHNDEGRIILLEFSNFYLLSTYSPNNGFDQTKFKRRSLFDNQMKEFVLFMKNENKNLIWTGDLNIAPEDVDLSHPIEFRKMKKGNVPKEYIGQPGCTDAERANFKTILKNGDLIDSYRYFENYKIKNDPTYKRKTNINDNIYTWRCPFLIGKSCNRAMRIDHFIVSKNLLNQIENIEIHGYSVFHTNFYGSDHCPVILNMKK</sequence>
<proteinExistence type="inferred from homology"/>
<protein>
    <recommendedName>
        <fullName evidence="3">DNA-(apurinic or apyrimidinic site) endonuclease</fullName>
        <ecNumber evidence="1">3.1.11.2</ecNumber>
    </recommendedName>
</protein>
<accession>A0A509ADV9</accession>
<evidence type="ECO:0000250" key="1">
    <source>
        <dbReference type="UniProtKB" id="O97240"/>
    </source>
</evidence>
<evidence type="ECO:0000255" key="2">
    <source>
        <dbReference type="PROSITE-ProRule" id="PRU00764"/>
    </source>
</evidence>
<evidence type="ECO:0000255" key="3">
    <source>
        <dbReference type="RuleBase" id="RU362131"/>
    </source>
</evidence>
<evidence type="ECO:0000256" key="4">
    <source>
        <dbReference type="SAM" id="MobiDB-lite"/>
    </source>
</evidence>
<evidence type="ECO:0000269" key="5">
    <source>
    </source>
</evidence>
<evidence type="ECO:0000303" key="6">
    <source>
    </source>
</evidence>
<evidence type="ECO:0000305" key="7"/>
<evidence type="ECO:0000312" key="8">
    <source>
        <dbReference type="EMBL" id="VUC54265.1"/>
    </source>
</evidence>
<evidence type="ECO:0000312" key="9">
    <source>
        <dbReference type="Proteomes" id="UP000074855"/>
    </source>
</evidence>
<gene>
    <name evidence="6" type="primary">APE1</name>
    <name evidence="8" type="ORF">PBANKA_0404100</name>
</gene>
<comment type="function">
    <text evidence="1 5">Multifunctional protein that plays a central role in mitochondrial DNA base excision repair pathway induced by oxidative stress. Has apurinic/apyrimidinic (AP) endonuclease activity towards double-stranded DNA (dsDNA). Has nucleotide incision repair (NIR) activity; acts on dsDNA with oxidized bases thymine glycol and 5,6-dihydro-2'-deoxyuridine. Has 3'-5' exonuclease; can use dsDNA templates with 3'-OH termini including blunt-end, gapped and mismatched 3'-recessed. Has 3'-phosphatase activity; cleaves 3'-phosphate from blunt, recessed and gapped dsDNA templates, followed by 3'-5' exonuclease activity. Has RNase H-like activity; cleaves RNA on 3'-recessed RNA-DNA duplex (By similarity). Plays a role in merosome infection of host erythrocytes (PubMed:33743509).</text>
</comment>
<comment type="catalytic activity">
    <reaction evidence="1">
        <text>Exonucleolytic cleavage in the 3'- to 5'-direction to yield nucleoside 5'-phosphates.</text>
        <dbReference type="EC" id="3.1.11.2"/>
    </reaction>
</comment>
<comment type="cofactor">
    <cofactor evidence="3">
        <name>Mg(2+)</name>
        <dbReference type="ChEBI" id="CHEBI:18420"/>
    </cofactor>
    <cofactor evidence="3">
        <name>Mn(2+)</name>
        <dbReference type="ChEBI" id="CHEBI:29035"/>
    </cofactor>
    <text evidence="3">Probably binds two magnesium or manganese ions per subunit.</text>
</comment>
<comment type="subcellular location">
    <subcellularLocation>
        <location evidence="1">Mitochondrion</location>
    </subcellularLocation>
</comment>
<comment type="PTM">
    <text evidence="1">May be proteolytically cleaved.</text>
</comment>
<comment type="disruption phenotype">
    <text evidence="5">Normal growth of blood-stage parasites (PubMed:33743509). Developmental stages in the mosquito vector are normal with no difference in oocyst numbers and salivary gland sporozoites (PubMed:33743509). C57BL/6 mice infected with knockout sporozoites have a 2-day delay in the appearance of blood-stage infection and have reduced parasitemia (PubMed:33743509). Formation and release of merosomes from infected mouse hepatocytes are normal (PubMed:33743509). However, merosome infectivity towards host erythrocytes is partially impaired resulting in a delay in the appearance of blood stage infection (PubMed:33743509).</text>
</comment>
<comment type="similarity">
    <text evidence="3">Belongs to the DNA repair enzymes AP/ExoA family.</text>
</comment>